<gene>
    <name evidence="1" type="primary">uxuA</name>
    <name type="ordered locus">ECED1_5204</name>
</gene>
<feature type="chain" id="PRO_1000197931" description="Mannonate dehydratase">
    <location>
        <begin position="1"/>
        <end position="394"/>
    </location>
</feature>
<organism>
    <name type="scientific">Escherichia coli O81 (strain ED1a)</name>
    <dbReference type="NCBI Taxonomy" id="585397"/>
    <lineage>
        <taxon>Bacteria</taxon>
        <taxon>Pseudomonadati</taxon>
        <taxon>Pseudomonadota</taxon>
        <taxon>Gammaproteobacteria</taxon>
        <taxon>Enterobacterales</taxon>
        <taxon>Enterobacteriaceae</taxon>
        <taxon>Escherichia</taxon>
    </lineage>
</organism>
<name>UXUA_ECO81</name>
<dbReference type="EC" id="4.2.1.8" evidence="1"/>
<dbReference type="EMBL" id="CU928162">
    <property type="protein sequence ID" value="CAR11156.1"/>
    <property type="molecule type" value="Genomic_DNA"/>
</dbReference>
<dbReference type="RefSeq" id="WP_000438571.1">
    <property type="nucleotide sequence ID" value="NC_011745.1"/>
</dbReference>
<dbReference type="SMR" id="B7MT80"/>
<dbReference type="KEGG" id="ecq:ECED1_5204"/>
<dbReference type="HOGENOM" id="CLU_058621_2_0_6"/>
<dbReference type="UniPathway" id="UPA00246"/>
<dbReference type="Proteomes" id="UP000000748">
    <property type="component" value="Chromosome"/>
</dbReference>
<dbReference type="GO" id="GO:0008198">
    <property type="term" value="F:ferrous iron binding"/>
    <property type="evidence" value="ECO:0007669"/>
    <property type="project" value="TreeGrafter"/>
</dbReference>
<dbReference type="GO" id="GO:0030145">
    <property type="term" value="F:manganese ion binding"/>
    <property type="evidence" value="ECO:0007669"/>
    <property type="project" value="TreeGrafter"/>
</dbReference>
<dbReference type="GO" id="GO:0008927">
    <property type="term" value="F:mannonate dehydratase activity"/>
    <property type="evidence" value="ECO:0007669"/>
    <property type="project" value="UniProtKB-UniRule"/>
</dbReference>
<dbReference type="GO" id="GO:0042840">
    <property type="term" value="P:D-glucuronate catabolic process"/>
    <property type="evidence" value="ECO:0007669"/>
    <property type="project" value="TreeGrafter"/>
</dbReference>
<dbReference type="FunFam" id="3.20.20.150:FF:000004">
    <property type="entry name" value="Mannonate dehydratase"/>
    <property type="match status" value="1"/>
</dbReference>
<dbReference type="FunFam" id="3.20.20.150:FF:000005">
    <property type="entry name" value="Mannonate dehydratase"/>
    <property type="match status" value="1"/>
</dbReference>
<dbReference type="Gene3D" id="3.20.20.150">
    <property type="entry name" value="Divalent-metal-dependent TIM barrel enzymes"/>
    <property type="match status" value="2"/>
</dbReference>
<dbReference type="HAMAP" id="MF_00106">
    <property type="entry name" value="UxuA"/>
    <property type="match status" value="1"/>
</dbReference>
<dbReference type="InterPro" id="IPR004628">
    <property type="entry name" value="Man_deHydtase"/>
</dbReference>
<dbReference type="InterPro" id="IPR036237">
    <property type="entry name" value="Xyl_isomerase-like_sf"/>
</dbReference>
<dbReference type="NCBIfam" id="NF003027">
    <property type="entry name" value="PRK03906.1"/>
    <property type="match status" value="1"/>
</dbReference>
<dbReference type="NCBIfam" id="TIGR00695">
    <property type="entry name" value="uxuA"/>
    <property type="match status" value="1"/>
</dbReference>
<dbReference type="PANTHER" id="PTHR30387">
    <property type="entry name" value="MANNONATE DEHYDRATASE"/>
    <property type="match status" value="1"/>
</dbReference>
<dbReference type="PANTHER" id="PTHR30387:SF2">
    <property type="entry name" value="MANNONATE DEHYDRATASE"/>
    <property type="match status" value="1"/>
</dbReference>
<dbReference type="Pfam" id="PF03786">
    <property type="entry name" value="UxuA"/>
    <property type="match status" value="1"/>
</dbReference>
<dbReference type="PIRSF" id="PIRSF016049">
    <property type="entry name" value="Man_dehyd"/>
    <property type="match status" value="1"/>
</dbReference>
<dbReference type="SUPFAM" id="SSF51658">
    <property type="entry name" value="Xylose isomerase-like"/>
    <property type="match status" value="1"/>
</dbReference>
<reference key="1">
    <citation type="journal article" date="2009" name="PLoS Genet.">
        <title>Organised genome dynamics in the Escherichia coli species results in highly diverse adaptive paths.</title>
        <authorList>
            <person name="Touchon M."/>
            <person name="Hoede C."/>
            <person name="Tenaillon O."/>
            <person name="Barbe V."/>
            <person name="Baeriswyl S."/>
            <person name="Bidet P."/>
            <person name="Bingen E."/>
            <person name="Bonacorsi S."/>
            <person name="Bouchier C."/>
            <person name="Bouvet O."/>
            <person name="Calteau A."/>
            <person name="Chiapello H."/>
            <person name="Clermont O."/>
            <person name="Cruveiller S."/>
            <person name="Danchin A."/>
            <person name="Diard M."/>
            <person name="Dossat C."/>
            <person name="Karoui M.E."/>
            <person name="Frapy E."/>
            <person name="Garry L."/>
            <person name="Ghigo J.M."/>
            <person name="Gilles A.M."/>
            <person name="Johnson J."/>
            <person name="Le Bouguenec C."/>
            <person name="Lescat M."/>
            <person name="Mangenot S."/>
            <person name="Martinez-Jehanne V."/>
            <person name="Matic I."/>
            <person name="Nassif X."/>
            <person name="Oztas S."/>
            <person name="Petit M.A."/>
            <person name="Pichon C."/>
            <person name="Rouy Z."/>
            <person name="Ruf C.S."/>
            <person name="Schneider D."/>
            <person name="Tourret J."/>
            <person name="Vacherie B."/>
            <person name="Vallenet D."/>
            <person name="Medigue C."/>
            <person name="Rocha E.P.C."/>
            <person name="Denamur E."/>
        </authorList>
    </citation>
    <scope>NUCLEOTIDE SEQUENCE [LARGE SCALE GENOMIC DNA]</scope>
    <source>
        <strain>ED1a</strain>
    </source>
</reference>
<evidence type="ECO:0000255" key="1">
    <source>
        <dbReference type="HAMAP-Rule" id="MF_00106"/>
    </source>
</evidence>
<keyword id="KW-0408">Iron</keyword>
<keyword id="KW-0456">Lyase</keyword>
<keyword id="KW-0464">Manganese</keyword>
<accession>B7MT80</accession>
<proteinExistence type="inferred from homology"/>
<comment type="function">
    <text evidence="1">Catalyzes the dehydration of D-mannonate.</text>
</comment>
<comment type="catalytic activity">
    <reaction evidence="1">
        <text>D-mannonate = 2-dehydro-3-deoxy-D-gluconate + H2O</text>
        <dbReference type="Rhea" id="RHEA:20097"/>
        <dbReference type="ChEBI" id="CHEBI:15377"/>
        <dbReference type="ChEBI" id="CHEBI:17767"/>
        <dbReference type="ChEBI" id="CHEBI:57990"/>
        <dbReference type="EC" id="4.2.1.8"/>
    </reaction>
</comment>
<comment type="cofactor">
    <cofactor evidence="1">
        <name>Fe(2+)</name>
        <dbReference type="ChEBI" id="CHEBI:29033"/>
    </cofactor>
    <cofactor evidence="1">
        <name>Mn(2+)</name>
        <dbReference type="ChEBI" id="CHEBI:29035"/>
    </cofactor>
</comment>
<comment type="pathway">
    <text evidence="1">Carbohydrate metabolism; pentose and glucuronate interconversion.</text>
</comment>
<comment type="similarity">
    <text evidence="1">Belongs to the mannonate dehydratase family.</text>
</comment>
<sequence>MEQTWRWYGPNDPVSLADVRQAGATGVVTALHHIPNGEVWSVEEILKRKAIVEDAGLVWSVVESVPIHEDIKTHTGNYEQWIANYQQTLRNLAQCGIRTVCYNFMPVLDWTRTDLEYVLPDGSKALRFDQIEFAAFELHILKRPGAEADYTEEEIAQAAVRFATMSDEDKARLTRNIIAGLPGAEEGYTLDQFRKHLELYKDIDKAKLRENFAVFLKAIIPVAEEVGVRMAVHPDDPPRPILGLPRIVSTIEDMQWMVDTVNSMANGFTMCTGSYGVRADNDLVDMIKQFGPRIYFTHLRSTMREDNPKTFHEAAHLNGDVDMYEVVKAIVEEEHRRKAEGKEDLIPMRPDHGHQMLDDLKKKTNPGYSAIGRLKGLAEVRGVELAIQRAFFSR</sequence>
<protein>
    <recommendedName>
        <fullName evidence="1">Mannonate dehydratase</fullName>
        <ecNumber evidence="1">4.2.1.8</ecNumber>
    </recommendedName>
    <alternativeName>
        <fullName evidence="1">D-mannonate hydro-lyase</fullName>
    </alternativeName>
</protein>